<name>SACA6_DANRE</name>
<organism evidence="8">
    <name type="scientific">Danio rerio</name>
    <name type="common">Zebrafish</name>
    <name type="synonym">Brachydanio rerio</name>
    <dbReference type="NCBI Taxonomy" id="7955"/>
    <lineage>
        <taxon>Eukaryota</taxon>
        <taxon>Metazoa</taxon>
        <taxon>Chordata</taxon>
        <taxon>Craniata</taxon>
        <taxon>Vertebrata</taxon>
        <taxon>Euteleostomi</taxon>
        <taxon>Actinopterygii</taxon>
        <taxon>Neopterygii</taxon>
        <taxon>Teleostei</taxon>
        <taxon>Ostariophysi</taxon>
        <taxon>Cypriniformes</taxon>
        <taxon>Danionidae</taxon>
        <taxon>Danioninae</taxon>
        <taxon>Danio</taxon>
    </lineage>
</organism>
<keyword id="KW-0968">Cytoplasmic vesicle</keyword>
<keyword id="KW-1015">Disulfide bond</keyword>
<keyword id="KW-0278">Fertilization</keyword>
<keyword id="KW-0325">Glycoprotein</keyword>
<keyword id="KW-0393">Immunoglobulin domain</keyword>
<keyword id="KW-0472">Membrane</keyword>
<keyword id="KW-1185">Reference proteome</keyword>
<keyword id="KW-0732">Signal</keyword>
<keyword id="KW-0812">Transmembrane</keyword>
<keyword id="KW-1133">Transmembrane helix</keyword>
<proteinExistence type="evidence at protein level"/>
<accession>A0A8M9PDM1</accession>
<feature type="signal peptide" evidence="2">
    <location>
        <begin position="1"/>
        <end position="18"/>
    </location>
</feature>
<feature type="chain" id="PRO_0000460719" description="Sperm acrosome membrane-associated protein 6">
    <location>
        <begin position="19"/>
        <end position="317"/>
    </location>
</feature>
<feature type="topological domain" description="Extracellular" evidence="7">
    <location>
        <begin position="19"/>
        <end position="281"/>
    </location>
</feature>
<feature type="transmembrane region" description="Helical" evidence="2">
    <location>
        <begin position="282"/>
        <end position="302"/>
    </location>
</feature>
<feature type="topological domain" description="Cytoplasmic" evidence="7">
    <location>
        <begin position="303"/>
        <end position="317"/>
    </location>
</feature>
<feature type="domain" description="Ig-like" evidence="3">
    <location>
        <begin position="123"/>
        <end position="237"/>
    </location>
</feature>
<feature type="glycosylation site" description="N-linked (GlcNAc...) asparagine" evidence="4">
    <location>
        <position position="29"/>
    </location>
</feature>
<feature type="glycosylation site" description="N-linked (GlcNAc...) asparagine" evidence="4">
    <location>
        <position position="168"/>
    </location>
</feature>
<feature type="disulfide bond" evidence="1">
    <location>
        <begin position="21"/>
        <end position="143"/>
    </location>
</feature>
<feature type="disulfide bond" evidence="1">
    <location>
        <begin position="24"/>
        <end position="146"/>
    </location>
</feature>
<feature type="disulfide bond" evidence="1">
    <location>
        <begin position="35"/>
        <end position="51"/>
    </location>
</feature>
<feature type="disulfide bond" evidence="1">
    <location>
        <begin position="128"/>
        <end position="151"/>
    </location>
</feature>
<feature type="disulfide bond" evidence="1">
    <location>
        <begin position="132"/>
        <end position="157"/>
    </location>
</feature>
<feature type="disulfide bond" evidence="1">
    <location>
        <begin position="174"/>
        <end position="227"/>
    </location>
</feature>
<feature type="mutagenesis site" description="Loss of interaction with bncr." evidence="6">
    <original>D</original>
    <variation>A</variation>
    <location>
        <position position="49"/>
    </location>
</feature>
<feature type="mutagenesis site" description="Loss of interaction with bncr." evidence="6">
    <original>E</original>
    <variation>K</variation>
    <location>
        <position position="152"/>
    </location>
</feature>
<dbReference type="RefSeq" id="NP_001384707.1">
    <property type="nucleotide sequence ID" value="NM_001397778.1"/>
</dbReference>
<dbReference type="SMR" id="A0A8M9PDM1"/>
<dbReference type="GeneID" id="101885333"/>
<dbReference type="AGR" id="ZFIN:ZDB-GENE-131121-197"/>
<dbReference type="ZFIN" id="ZDB-GENE-131121-197">
    <property type="gene designation" value="spaca6"/>
</dbReference>
<dbReference type="OrthoDB" id="8960581at2759"/>
<dbReference type="Proteomes" id="UP000000437">
    <property type="component" value="Chromosome 16"/>
</dbReference>
<dbReference type="GO" id="GO:0002080">
    <property type="term" value="C:acrosomal membrane"/>
    <property type="evidence" value="ECO:0007669"/>
    <property type="project" value="UniProtKB-SubCell"/>
</dbReference>
<dbReference type="GO" id="GO:0007342">
    <property type="term" value="P:fusion of sperm to egg plasma membrane involved in single fertilization"/>
    <property type="evidence" value="ECO:0007669"/>
    <property type="project" value="InterPro"/>
</dbReference>
<dbReference type="GO" id="GO:0043012">
    <property type="term" value="P:regulation of fusion of sperm to egg plasma membrane"/>
    <property type="evidence" value="ECO:0000315"/>
    <property type="project" value="ZFIN"/>
</dbReference>
<dbReference type="GO" id="GO:0035036">
    <property type="term" value="P:sperm-egg recognition"/>
    <property type="evidence" value="ECO:0000314"/>
    <property type="project" value="UniProtKB"/>
</dbReference>
<dbReference type="Gene3D" id="2.60.40.10">
    <property type="entry name" value="Immunoglobulins"/>
    <property type="match status" value="1"/>
</dbReference>
<dbReference type="InterPro" id="IPR007110">
    <property type="entry name" value="Ig-like_dom"/>
</dbReference>
<dbReference type="InterPro" id="IPR036179">
    <property type="entry name" value="Ig-like_dom_sf"/>
</dbReference>
<dbReference type="InterPro" id="IPR013783">
    <property type="entry name" value="Ig-like_fold"/>
</dbReference>
<dbReference type="InterPro" id="IPR003599">
    <property type="entry name" value="Ig_sub"/>
</dbReference>
<dbReference type="InterPro" id="IPR034549">
    <property type="entry name" value="SPACA6"/>
</dbReference>
<dbReference type="PANTHER" id="PTHR37366">
    <property type="entry name" value="SPERM ACROSOME MEMBRANE-ASSOCIATED PROTEIN 6"/>
    <property type="match status" value="1"/>
</dbReference>
<dbReference type="PANTHER" id="PTHR37366:SF1">
    <property type="entry name" value="SPERM ACROSOME MEMBRANE-ASSOCIATED PROTEIN 6"/>
    <property type="match status" value="1"/>
</dbReference>
<dbReference type="SMART" id="SM00409">
    <property type="entry name" value="IG"/>
    <property type="match status" value="1"/>
</dbReference>
<dbReference type="SUPFAM" id="SSF48726">
    <property type="entry name" value="Immunoglobulin"/>
    <property type="match status" value="1"/>
</dbReference>
<dbReference type="PROSITE" id="PS50835">
    <property type="entry name" value="IG_LIKE"/>
    <property type="match status" value="1"/>
</dbReference>
<protein>
    <recommendedName>
        <fullName evidence="7">Sperm acrosome membrane-associated protein 6</fullName>
    </recommendedName>
</protein>
<reference evidence="7" key="1">
    <citation type="journal article" date="2021" name="Front. Cell Dev. Biol.">
        <title>The Sperm Protein Spaca6 is Essential for Fertilization in Zebrafish.</title>
        <authorList>
            <person name="Binner M.I."/>
            <person name="Kogan A."/>
            <person name="Panser K."/>
            <person name="Schleiffer A."/>
            <person name="Deneke V.E."/>
            <person name="Pauli A."/>
        </authorList>
    </citation>
    <scope>NUCLEOTIDE SEQUENCE [MRNA]</scope>
    <scope>FUNCTION</scope>
    <scope>TISSUE SPECIFICITY</scope>
    <scope>DISRUPTION PHENOTYPE</scope>
</reference>
<reference evidence="8" key="2">
    <citation type="journal article" date="2013" name="Nature">
        <title>The zebrafish reference genome sequence and its relationship to the human genome.</title>
        <authorList>
            <person name="Howe K."/>
            <person name="Clark M.D."/>
            <person name="Torroja C.F."/>
            <person name="Torrance J."/>
            <person name="Berthelot C."/>
            <person name="Muffato M."/>
            <person name="Collins J.E."/>
            <person name="Humphray S."/>
            <person name="McLaren K."/>
            <person name="Matthews L."/>
            <person name="McLaren S."/>
            <person name="Sealy I."/>
            <person name="Caccamo M."/>
            <person name="Churcher C."/>
            <person name="Scott C."/>
            <person name="Barrett J.C."/>
            <person name="Koch R."/>
            <person name="Rauch G.J."/>
            <person name="White S."/>
            <person name="Chow W."/>
            <person name="Kilian B."/>
            <person name="Quintais L.T."/>
            <person name="Guerra-Assuncao J.A."/>
            <person name="Zhou Y."/>
            <person name="Gu Y."/>
            <person name="Yen J."/>
            <person name="Vogel J.H."/>
            <person name="Eyre T."/>
            <person name="Redmond S."/>
            <person name="Banerjee R."/>
            <person name="Chi J."/>
            <person name="Fu B."/>
            <person name="Langley E."/>
            <person name="Maguire S.F."/>
            <person name="Laird G.K."/>
            <person name="Lloyd D."/>
            <person name="Kenyon E."/>
            <person name="Donaldson S."/>
            <person name="Sehra H."/>
            <person name="Almeida-King J."/>
            <person name="Loveland J."/>
            <person name="Trevanion S."/>
            <person name="Jones M."/>
            <person name="Quail M."/>
            <person name="Willey D."/>
            <person name="Hunt A."/>
            <person name="Burton J."/>
            <person name="Sims S."/>
            <person name="McLay K."/>
            <person name="Plumb B."/>
            <person name="Davis J."/>
            <person name="Clee C."/>
            <person name="Oliver K."/>
            <person name="Clark R."/>
            <person name="Riddle C."/>
            <person name="Elliot D."/>
            <person name="Threadgold G."/>
            <person name="Harden G."/>
            <person name="Ware D."/>
            <person name="Begum S."/>
            <person name="Mortimore B."/>
            <person name="Kerry G."/>
            <person name="Heath P."/>
            <person name="Phillimore B."/>
            <person name="Tracey A."/>
            <person name="Corby N."/>
            <person name="Dunn M."/>
            <person name="Johnson C."/>
            <person name="Wood J."/>
            <person name="Clark S."/>
            <person name="Pelan S."/>
            <person name="Griffiths G."/>
            <person name="Smith M."/>
            <person name="Glithero R."/>
            <person name="Howden P."/>
            <person name="Barker N."/>
            <person name="Lloyd C."/>
            <person name="Stevens C."/>
            <person name="Harley J."/>
            <person name="Holt K."/>
            <person name="Panagiotidis G."/>
            <person name="Lovell J."/>
            <person name="Beasley H."/>
            <person name="Henderson C."/>
            <person name="Gordon D."/>
            <person name="Auger K."/>
            <person name="Wright D."/>
            <person name="Collins J."/>
            <person name="Raisen C."/>
            <person name="Dyer L."/>
            <person name="Leung K."/>
            <person name="Robertson L."/>
            <person name="Ambridge K."/>
            <person name="Leongamornlert D."/>
            <person name="McGuire S."/>
            <person name="Gilderthorp R."/>
            <person name="Griffiths C."/>
            <person name="Manthravadi D."/>
            <person name="Nichol S."/>
            <person name="Barker G."/>
            <person name="Whitehead S."/>
            <person name="Kay M."/>
            <person name="Brown J."/>
            <person name="Murnane C."/>
            <person name="Gray E."/>
            <person name="Humphries M."/>
            <person name="Sycamore N."/>
            <person name="Barker D."/>
            <person name="Saunders D."/>
            <person name="Wallis J."/>
            <person name="Babbage A."/>
            <person name="Hammond S."/>
            <person name="Mashreghi-Mohammadi M."/>
            <person name="Barr L."/>
            <person name="Martin S."/>
            <person name="Wray P."/>
            <person name="Ellington A."/>
            <person name="Matthews N."/>
            <person name="Ellwood M."/>
            <person name="Woodmansey R."/>
            <person name="Clark G."/>
            <person name="Cooper J."/>
            <person name="Tromans A."/>
            <person name="Grafham D."/>
            <person name="Skuce C."/>
            <person name="Pandian R."/>
            <person name="Andrews R."/>
            <person name="Harrison E."/>
            <person name="Kimberley A."/>
            <person name="Garnett J."/>
            <person name="Fosker N."/>
            <person name="Hall R."/>
            <person name="Garner P."/>
            <person name="Kelly D."/>
            <person name="Bird C."/>
            <person name="Palmer S."/>
            <person name="Gehring I."/>
            <person name="Berger A."/>
            <person name="Dooley C.M."/>
            <person name="Ersan-Urun Z."/>
            <person name="Eser C."/>
            <person name="Geiger H."/>
            <person name="Geisler M."/>
            <person name="Karotki L."/>
            <person name="Kirn A."/>
            <person name="Konantz J."/>
            <person name="Konantz M."/>
            <person name="Oberlander M."/>
            <person name="Rudolph-Geiger S."/>
            <person name="Teucke M."/>
            <person name="Lanz C."/>
            <person name="Raddatz G."/>
            <person name="Osoegawa K."/>
            <person name="Zhu B."/>
            <person name="Rapp A."/>
            <person name="Widaa S."/>
            <person name="Langford C."/>
            <person name="Yang F."/>
            <person name="Schuster S.C."/>
            <person name="Carter N.P."/>
            <person name="Harrow J."/>
            <person name="Ning Z."/>
            <person name="Herrero J."/>
            <person name="Searle S.M."/>
            <person name="Enright A."/>
            <person name="Geisler R."/>
            <person name="Plasterk R.H."/>
            <person name="Lee C."/>
            <person name="Westerfield M."/>
            <person name="de Jong P.J."/>
            <person name="Zon L.I."/>
            <person name="Postlethwait J.H."/>
            <person name="Nusslein-Volhard C."/>
            <person name="Hubbard T.J."/>
            <person name="Roest Crollius H."/>
            <person name="Rogers J."/>
            <person name="Stemple D.L."/>
        </authorList>
    </citation>
    <scope>NUCLEOTIDE SEQUENCE [LARGE SCALE GENOMIC DNA]</scope>
    <source>
        <strain>Tuebingen</strain>
    </source>
</reference>
<reference key="3">
    <citation type="journal article" date="2024" name="Cell">
        <title>A conserved fertilization complex bridges sperm and egg in vertebrates.</title>
        <authorList>
            <person name="Deneke V.E."/>
            <person name="Blaha A."/>
            <person name="Lu Y."/>
            <person name="Suwita J.P."/>
            <person name="Draper J.M."/>
            <person name="Phan C.S."/>
            <person name="Panser K."/>
            <person name="Schleiffer A."/>
            <person name="Jacob L."/>
            <person name="Humer T."/>
            <person name="Stejskal K."/>
            <person name="Krssakova G."/>
            <person name="Roitinger E."/>
            <person name="Handler D."/>
            <person name="Kamoshita M."/>
            <person name="Vance T.D.R."/>
            <person name="Wang X."/>
            <person name="Surm J.M."/>
            <person name="Moran Y."/>
            <person name="Lee J.E."/>
            <person name="Ikawa M."/>
            <person name="Pauli A."/>
        </authorList>
    </citation>
    <scope>FUNCTION</scope>
    <scope>TISSUE SPECIFICITY</scope>
    <scope>INTERACTION WITH IZUMO1; TMEM81 AND BNCR</scope>
    <scope>MUTAGENESIS OF ASP-49 AND GLU-152</scope>
</reference>
<comment type="function">
    <text evidence="5 6">Sperm protein required for fusion of sperm with the egg membrane during fertilization (PubMed:35047514, PubMed:39423812). May regulate the expression of sperm surface protein DCST2 (PubMed:35047514).</text>
</comment>
<comment type="subunit">
    <text evidence="6">Forms a complex with izumo1 and tmem81 on spermatocyte cell membrane. The complex binds to oocyte protein bncr.</text>
</comment>
<comment type="subcellular location">
    <subcellularLocation>
        <location evidence="1">Cytoplasmic vesicle</location>
        <location evidence="1">Secretory vesicle</location>
        <location evidence="1">Acrosome membrane</location>
        <topology evidence="2">Single-pass type I membrane protein</topology>
    </subcellularLocation>
</comment>
<comment type="tissue specificity">
    <text evidence="5 6">Expressed in testis.</text>
</comment>
<comment type="domain">
    <text evidence="1">The extracellular domain shows strong structural similarity with IZUMO1 but does not interact with the IZUMO1 receptor IZUMO1R/JUNO.</text>
</comment>
<comment type="disruption phenotype">
    <text evidence="5">Leads to male infertility; mutant sperms have reduced dcst2 levels and fail to stably adhere to the egg plasma membrane.</text>
</comment>
<comment type="similarity">
    <text evidence="7">Belongs to the SPACA6 family.</text>
</comment>
<evidence type="ECO:0000250" key="1">
    <source>
        <dbReference type="UniProtKB" id="W5XKT8"/>
    </source>
</evidence>
<evidence type="ECO:0000255" key="2"/>
<evidence type="ECO:0000255" key="3">
    <source>
        <dbReference type="PROSITE-ProRule" id="PRU00114"/>
    </source>
</evidence>
<evidence type="ECO:0000255" key="4">
    <source>
        <dbReference type="PROSITE-ProRule" id="PRU00498"/>
    </source>
</evidence>
<evidence type="ECO:0000269" key="5">
    <source>
    </source>
</evidence>
<evidence type="ECO:0000269" key="6">
    <source>
    </source>
</evidence>
<evidence type="ECO:0000305" key="7"/>
<evidence type="ECO:0000312" key="8">
    <source>
        <dbReference type="Proteomes" id="UP000000437"/>
    </source>
</evidence>
<evidence type="ECO:0000312" key="9">
    <source>
        <dbReference type="ZFIN" id="ZDB-GENE-131121-197"/>
    </source>
</evidence>
<sequence>MFVFIAKLLIFSSVITSAFTCYQCFIDENDSRRLCLGHILTEYNVRNVDSCYKTLDRIFNNEEKVIEAGKVGRGYDLTLKNILMAEIMPIVEEFDQQLNYDTEYESRLQAAANNFIAAASSLPRVSGCLPPCGFQVQGAVYNCVTCQYDSCEFPLDCPGKEITVQENNRTQMWCSVPFLLPADVEIVWRYAQDRTMLRERFDDVTVGVDPLYSIPSARPEQSGTYQCEVLSQEQSLVRLYFYLTVVPVAQTYHVHLQDLCAQALRPEPQFPPSFSFWLPRPALLITCLTATMLLIFLSLGAMCRLWYQIRTNVSNPA</sequence>
<gene>
    <name evidence="9" type="primary">spaca6</name>
</gene>